<evidence type="ECO:0000250" key="1">
    <source>
        <dbReference type="UniProtKB" id="Q5T601"/>
    </source>
</evidence>
<evidence type="ECO:0000255" key="2"/>
<evidence type="ECO:0000255" key="3">
    <source>
        <dbReference type="PROSITE-ProRule" id="PRU00098"/>
    </source>
</evidence>
<evidence type="ECO:0000255" key="4">
    <source>
        <dbReference type="PROSITE-ProRule" id="PRU00188"/>
    </source>
</evidence>
<evidence type="ECO:0000269" key="5">
    <source>
    </source>
</evidence>
<evidence type="ECO:0000269" key="6">
    <source>
    </source>
</evidence>
<evidence type="ECO:0000269" key="7">
    <source>
    </source>
</evidence>
<evidence type="ECO:0000303" key="8">
    <source>
    </source>
</evidence>
<evidence type="ECO:0000305" key="9"/>
<evidence type="ECO:0000312" key="10">
    <source>
        <dbReference type="MGI" id="MGI:1924846"/>
    </source>
</evidence>
<gene>
    <name evidence="8 10" type="primary">Adgrf1</name>
    <name evidence="8" type="synonym">Gpr110</name>
</gene>
<protein>
    <recommendedName>
        <fullName evidence="8">Adhesion G-protein coupled receptor F1</fullName>
    </recommendedName>
    <alternativeName>
        <fullName evidence="8">G protein-coupled receptor 110</fullName>
    </alternativeName>
    <component>
        <recommendedName>
            <fullName evidence="9">Adhesion G-protein coupled receptor F1, N-terminal fragment</fullName>
            <shortName evidence="9">ADGRF1 N-terminal fragment</shortName>
        </recommendedName>
    </component>
    <component>
        <recommendedName>
            <fullName evidence="9">Adhesion G-protein coupled receptor F1, C-terminal fragment</fullName>
            <shortName evidence="9">ADGRF1 C-terminal fragment</shortName>
        </recommendedName>
    </component>
</protein>
<accession>Q8VEC3</accession>
<accession>B0V2Q5</accession>
<accession>Q8BMV8</accession>
<reference key="1">
    <citation type="journal article" date="2009" name="PLoS Biol.">
        <title>Lineage-specific biology revealed by a finished genome assembly of the mouse.</title>
        <authorList>
            <person name="Church D.M."/>
            <person name="Goodstadt L."/>
            <person name="Hillier L.W."/>
            <person name="Zody M.C."/>
            <person name="Goldstein S."/>
            <person name="She X."/>
            <person name="Bult C.J."/>
            <person name="Agarwala R."/>
            <person name="Cherry J.L."/>
            <person name="DiCuccio M."/>
            <person name="Hlavina W."/>
            <person name="Kapustin Y."/>
            <person name="Meric P."/>
            <person name="Maglott D."/>
            <person name="Birtle Z."/>
            <person name="Marques A.C."/>
            <person name="Graves T."/>
            <person name="Zhou S."/>
            <person name="Teague B."/>
            <person name="Potamousis K."/>
            <person name="Churas C."/>
            <person name="Place M."/>
            <person name="Herschleb J."/>
            <person name="Runnheim R."/>
            <person name="Forrest D."/>
            <person name="Amos-Landgraf J."/>
            <person name="Schwartz D.C."/>
            <person name="Cheng Z."/>
            <person name="Lindblad-Toh K."/>
            <person name="Eichler E.E."/>
            <person name="Ponting C.P."/>
        </authorList>
    </citation>
    <scope>NUCLEOTIDE SEQUENCE [LARGE SCALE GENOMIC DNA]</scope>
    <source>
        <strain>C57BL/6J</strain>
    </source>
</reference>
<reference key="2">
    <citation type="journal article" date="2004" name="Genome Res.">
        <title>The status, quality, and expansion of the NIH full-length cDNA project: the Mammalian Gene Collection (MGC).</title>
        <authorList>
            <consortium name="The MGC Project Team"/>
        </authorList>
    </citation>
    <scope>NUCLEOTIDE SEQUENCE [LARGE SCALE MRNA]</scope>
    <source>
        <strain>Czech II</strain>
        <tissue>Mammary tumor</tissue>
    </source>
</reference>
<reference key="3">
    <citation type="journal article" date="2005" name="Science">
        <title>The transcriptional landscape of the mammalian genome.</title>
        <authorList>
            <person name="Carninci P."/>
            <person name="Kasukawa T."/>
            <person name="Katayama S."/>
            <person name="Gough J."/>
            <person name="Frith M.C."/>
            <person name="Maeda N."/>
            <person name="Oyama R."/>
            <person name="Ravasi T."/>
            <person name="Lenhard B."/>
            <person name="Wells C."/>
            <person name="Kodzius R."/>
            <person name="Shimokawa K."/>
            <person name="Bajic V.B."/>
            <person name="Brenner S.E."/>
            <person name="Batalov S."/>
            <person name="Forrest A.R."/>
            <person name="Zavolan M."/>
            <person name="Davis M.J."/>
            <person name="Wilming L.G."/>
            <person name="Aidinis V."/>
            <person name="Allen J.E."/>
            <person name="Ambesi-Impiombato A."/>
            <person name="Apweiler R."/>
            <person name="Aturaliya R.N."/>
            <person name="Bailey T.L."/>
            <person name="Bansal M."/>
            <person name="Baxter L."/>
            <person name="Beisel K.W."/>
            <person name="Bersano T."/>
            <person name="Bono H."/>
            <person name="Chalk A.M."/>
            <person name="Chiu K.P."/>
            <person name="Choudhary V."/>
            <person name="Christoffels A."/>
            <person name="Clutterbuck D.R."/>
            <person name="Crowe M.L."/>
            <person name="Dalla E."/>
            <person name="Dalrymple B.P."/>
            <person name="de Bono B."/>
            <person name="Della Gatta G."/>
            <person name="di Bernardo D."/>
            <person name="Down T."/>
            <person name="Engstrom P."/>
            <person name="Fagiolini M."/>
            <person name="Faulkner G."/>
            <person name="Fletcher C.F."/>
            <person name="Fukushima T."/>
            <person name="Furuno M."/>
            <person name="Futaki S."/>
            <person name="Gariboldi M."/>
            <person name="Georgii-Hemming P."/>
            <person name="Gingeras T.R."/>
            <person name="Gojobori T."/>
            <person name="Green R.E."/>
            <person name="Gustincich S."/>
            <person name="Harbers M."/>
            <person name="Hayashi Y."/>
            <person name="Hensch T.K."/>
            <person name="Hirokawa N."/>
            <person name="Hill D."/>
            <person name="Huminiecki L."/>
            <person name="Iacono M."/>
            <person name="Ikeo K."/>
            <person name="Iwama A."/>
            <person name="Ishikawa T."/>
            <person name="Jakt M."/>
            <person name="Kanapin A."/>
            <person name="Katoh M."/>
            <person name="Kawasawa Y."/>
            <person name="Kelso J."/>
            <person name="Kitamura H."/>
            <person name="Kitano H."/>
            <person name="Kollias G."/>
            <person name="Krishnan S.P."/>
            <person name="Kruger A."/>
            <person name="Kummerfeld S.K."/>
            <person name="Kurochkin I.V."/>
            <person name="Lareau L.F."/>
            <person name="Lazarevic D."/>
            <person name="Lipovich L."/>
            <person name="Liu J."/>
            <person name="Liuni S."/>
            <person name="McWilliam S."/>
            <person name="Madan Babu M."/>
            <person name="Madera M."/>
            <person name="Marchionni L."/>
            <person name="Matsuda H."/>
            <person name="Matsuzawa S."/>
            <person name="Miki H."/>
            <person name="Mignone F."/>
            <person name="Miyake S."/>
            <person name="Morris K."/>
            <person name="Mottagui-Tabar S."/>
            <person name="Mulder N."/>
            <person name="Nakano N."/>
            <person name="Nakauchi H."/>
            <person name="Ng P."/>
            <person name="Nilsson R."/>
            <person name="Nishiguchi S."/>
            <person name="Nishikawa S."/>
            <person name="Nori F."/>
            <person name="Ohara O."/>
            <person name="Okazaki Y."/>
            <person name="Orlando V."/>
            <person name="Pang K.C."/>
            <person name="Pavan W.J."/>
            <person name="Pavesi G."/>
            <person name="Pesole G."/>
            <person name="Petrovsky N."/>
            <person name="Piazza S."/>
            <person name="Reed J."/>
            <person name="Reid J.F."/>
            <person name="Ring B.Z."/>
            <person name="Ringwald M."/>
            <person name="Rost B."/>
            <person name="Ruan Y."/>
            <person name="Salzberg S.L."/>
            <person name="Sandelin A."/>
            <person name="Schneider C."/>
            <person name="Schoenbach C."/>
            <person name="Sekiguchi K."/>
            <person name="Semple C.A."/>
            <person name="Seno S."/>
            <person name="Sessa L."/>
            <person name="Sheng Y."/>
            <person name="Shibata Y."/>
            <person name="Shimada H."/>
            <person name="Shimada K."/>
            <person name="Silva D."/>
            <person name="Sinclair B."/>
            <person name="Sperling S."/>
            <person name="Stupka E."/>
            <person name="Sugiura K."/>
            <person name="Sultana R."/>
            <person name="Takenaka Y."/>
            <person name="Taki K."/>
            <person name="Tammoja K."/>
            <person name="Tan S.L."/>
            <person name="Tang S."/>
            <person name="Taylor M.S."/>
            <person name="Tegner J."/>
            <person name="Teichmann S.A."/>
            <person name="Ueda H.R."/>
            <person name="van Nimwegen E."/>
            <person name="Verardo R."/>
            <person name="Wei C.L."/>
            <person name="Yagi K."/>
            <person name="Yamanishi H."/>
            <person name="Zabarovsky E."/>
            <person name="Zhu S."/>
            <person name="Zimmer A."/>
            <person name="Hide W."/>
            <person name="Bult C."/>
            <person name="Grimmond S.M."/>
            <person name="Teasdale R.D."/>
            <person name="Liu E.T."/>
            <person name="Brusic V."/>
            <person name="Quackenbush J."/>
            <person name="Wahlestedt C."/>
            <person name="Mattick J.S."/>
            <person name="Hume D.A."/>
            <person name="Kai C."/>
            <person name="Sasaki D."/>
            <person name="Tomaru Y."/>
            <person name="Fukuda S."/>
            <person name="Kanamori-Katayama M."/>
            <person name="Suzuki M."/>
            <person name="Aoki J."/>
            <person name="Arakawa T."/>
            <person name="Iida J."/>
            <person name="Imamura K."/>
            <person name="Itoh M."/>
            <person name="Kato T."/>
            <person name="Kawaji H."/>
            <person name="Kawagashira N."/>
            <person name="Kawashima T."/>
            <person name="Kojima M."/>
            <person name="Kondo S."/>
            <person name="Konno H."/>
            <person name="Nakano K."/>
            <person name="Ninomiya N."/>
            <person name="Nishio T."/>
            <person name="Okada M."/>
            <person name="Plessy C."/>
            <person name="Shibata K."/>
            <person name="Shiraki T."/>
            <person name="Suzuki S."/>
            <person name="Tagami M."/>
            <person name="Waki K."/>
            <person name="Watahiki A."/>
            <person name="Okamura-Oho Y."/>
            <person name="Suzuki H."/>
            <person name="Kawai J."/>
            <person name="Hayashizaki Y."/>
        </authorList>
    </citation>
    <scope>NUCLEOTIDE SEQUENCE [LARGE SCALE MRNA] OF 1-733</scope>
    <source>
        <strain>C57BL/6J</strain>
        <tissue>Ovary</tissue>
        <tissue>Uterus</tissue>
    </source>
</reference>
<reference key="4">
    <citation type="journal article" date="2012" name="Dev. Dyn.">
        <title>Characterization and functional study of a cluster of four highly conserved orphan adhesion-GPCR in mouse.</title>
        <authorList>
            <person name="Promel S."/>
            <person name="Waller-Evans H."/>
            <person name="Dixon J."/>
            <person name="Zahn D."/>
            <person name="Colledge W.H."/>
            <person name="Doran J."/>
            <person name="Carlton M.B."/>
            <person name="Grosse J."/>
            <person name="Schoneberg T."/>
            <person name="Russ A.P."/>
            <person name="Langenhan T."/>
        </authorList>
    </citation>
    <scope>TISSUE SPECIFICITY</scope>
    <scope>DISRUPTION PHENOTYPE</scope>
</reference>
<reference key="5">
    <citation type="journal article" date="2016" name="Nat. Commun.">
        <title>Orphan GPR110 (ADGRF1) targeted by N-docosahexaenoylethanolamine in development of neurons and cognitive function.</title>
        <authorList>
            <person name="Lee J.W."/>
            <person name="Huang B.X."/>
            <person name="Kwon H."/>
            <person name="Rashid M.A."/>
            <person name="Kharebava G."/>
            <person name="Desai A."/>
            <person name="Patnaik S."/>
            <person name="Marugan J."/>
            <person name="Kim H.Y."/>
        </authorList>
    </citation>
    <scope>FUNCTION</scope>
    <scope>DISRUPTION PHENOTYPE</scope>
    <scope>DEVELOPMENTAL STAGE</scope>
</reference>
<reference key="6">
    <citation type="journal article" date="2023" name="Elife">
        <title>Amelioration of non-alcoholic fatty liver disease by targeting adhesion G protein-coupled receptor F1 (Adgrf1).</title>
        <authorList>
            <person name="Wu M."/>
            <person name="Lo T.H."/>
            <person name="Li L."/>
            <person name="Sun J."/>
            <person name="Deng C."/>
            <person name="Chan K.Y."/>
            <person name="Li X."/>
            <person name="Yeh S.T."/>
            <person name="Lee J.T.H."/>
            <person name="Lui P.P.Y."/>
            <person name="Xu A."/>
            <person name="Wong C.M."/>
        </authorList>
    </citation>
    <scope>FUNCTION</scope>
</reference>
<proteinExistence type="evidence at transcript level"/>
<dbReference type="EMBL" id="CT025700">
    <property type="protein sequence ID" value="CAQ12617.1"/>
    <property type="molecule type" value="Genomic_DNA"/>
</dbReference>
<dbReference type="EMBL" id="BC019217">
    <property type="protein sequence ID" value="AAH19217.1"/>
    <property type="molecule type" value="mRNA"/>
</dbReference>
<dbReference type="EMBL" id="AK019869">
    <property type="protein sequence ID" value="BAC25606.1"/>
    <property type="status" value="ALT_FRAME"/>
    <property type="molecule type" value="mRNA"/>
</dbReference>
<dbReference type="CCDS" id="CCDS28795.1"/>
<dbReference type="RefSeq" id="NP_598537.2">
    <property type="nucleotide sequence ID" value="NM_133776.3"/>
</dbReference>
<dbReference type="SMR" id="Q8VEC3"/>
<dbReference type="FunCoup" id="Q8VEC3">
    <property type="interactions" value="158"/>
</dbReference>
<dbReference type="STRING" id="10090.ENSMUSP00000049380"/>
<dbReference type="MEROPS" id="P02.026"/>
<dbReference type="GlyCosmos" id="Q8VEC3">
    <property type="glycosylation" value="13 sites, No reported glycans"/>
</dbReference>
<dbReference type="GlyGen" id="Q8VEC3">
    <property type="glycosylation" value="13 sites"/>
</dbReference>
<dbReference type="iPTMnet" id="Q8VEC3"/>
<dbReference type="PhosphoSitePlus" id="Q8VEC3"/>
<dbReference type="PaxDb" id="10090-ENSMUSP00000049380"/>
<dbReference type="ProteomicsDB" id="296130"/>
<dbReference type="Antibodypedia" id="30773">
    <property type="antibodies" value="187 antibodies from 27 providers"/>
</dbReference>
<dbReference type="DNASU" id="77596"/>
<dbReference type="Ensembl" id="ENSMUST00000047399.6">
    <property type="protein sequence ID" value="ENSMUSP00000049380.6"/>
    <property type="gene ID" value="ENSMUSG00000041293.6"/>
</dbReference>
<dbReference type="GeneID" id="77596"/>
<dbReference type="KEGG" id="mmu:77596"/>
<dbReference type="UCSC" id="uc008coz.2">
    <property type="organism name" value="mouse"/>
</dbReference>
<dbReference type="AGR" id="MGI:1924846"/>
<dbReference type="CTD" id="266977"/>
<dbReference type="MGI" id="MGI:1924846">
    <property type="gene designation" value="Adgrf1"/>
</dbReference>
<dbReference type="VEuPathDB" id="HostDB:ENSMUSG00000041293"/>
<dbReference type="eggNOG" id="KOG4193">
    <property type="taxonomic scope" value="Eukaryota"/>
</dbReference>
<dbReference type="GeneTree" id="ENSGT00940000161228"/>
<dbReference type="HOGENOM" id="CLU_002753_3_6_1"/>
<dbReference type="InParanoid" id="Q8VEC3"/>
<dbReference type="OMA" id="TQFLSTE"/>
<dbReference type="OrthoDB" id="10040049at2759"/>
<dbReference type="PhylomeDB" id="Q8VEC3"/>
<dbReference type="TreeFam" id="TF316380"/>
<dbReference type="BioGRID-ORCS" id="77596">
    <property type="hits" value="0 hits in 76 CRISPR screens"/>
</dbReference>
<dbReference type="ChiTaRS" id="Adgrf1">
    <property type="organism name" value="mouse"/>
</dbReference>
<dbReference type="PRO" id="PR:Q8VEC3"/>
<dbReference type="Proteomes" id="UP000000589">
    <property type="component" value="Chromosome 17"/>
</dbReference>
<dbReference type="RNAct" id="Q8VEC3">
    <property type="molecule type" value="protein"/>
</dbReference>
<dbReference type="Bgee" id="ENSMUSG00000041293">
    <property type="expression patterns" value="Expressed in conjunctival fornix and 24 other cell types or tissues"/>
</dbReference>
<dbReference type="GO" id="GO:0005886">
    <property type="term" value="C:plasma membrane"/>
    <property type="evidence" value="ECO:0000314"/>
    <property type="project" value="MGI"/>
</dbReference>
<dbReference type="GO" id="GO:0004930">
    <property type="term" value="F:G protein-coupled receptor activity"/>
    <property type="evidence" value="ECO:0000314"/>
    <property type="project" value="MGI"/>
</dbReference>
<dbReference type="GO" id="GO:0007189">
    <property type="term" value="P:adenylate cyclase-activating G protein-coupled receptor signaling pathway"/>
    <property type="evidence" value="ECO:0000314"/>
    <property type="project" value="MGI"/>
</dbReference>
<dbReference type="GO" id="GO:0007166">
    <property type="term" value="P:cell surface receptor signaling pathway"/>
    <property type="evidence" value="ECO:0007669"/>
    <property type="project" value="InterPro"/>
</dbReference>
<dbReference type="GO" id="GO:0007613">
    <property type="term" value="P:memory"/>
    <property type="evidence" value="ECO:0000315"/>
    <property type="project" value="MGI"/>
</dbReference>
<dbReference type="GO" id="GO:0031175">
    <property type="term" value="P:neuron projection development"/>
    <property type="evidence" value="ECO:0000314"/>
    <property type="project" value="MGI"/>
</dbReference>
<dbReference type="GO" id="GO:0007416">
    <property type="term" value="P:synapse assembly"/>
    <property type="evidence" value="ECO:0000315"/>
    <property type="project" value="MGI"/>
</dbReference>
<dbReference type="FunFam" id="1.20.1070.10:FF:000058">
    <property type="entry name" value="Adhesion G protein-coupled receptor F5"/>
    <property type="match status" value="1"/>
</dbReference>
<dbReference type="Gene3D" id="2.60.220.50">
    <property type="match status" value="1"/>
</dbReference>
<dbReference type="Gene3D" id="1.20.1070.10">
    <property type="entry name" value="Rhodopsin 7-helix transmembrane proteins"/>
    <property type="match status" value="1"/>
</dbReference>
<dbReference type="InterPro" id="IPR051587">
    <property type="entry name" value="Adhesion_GPCR"/>
</dbReference>
<dbReference type="InterPro" id="IPR057244">
    <property type="entry name" value="GAIN_B"/>
</dbReference>
<dbReference type="InterPro" id="IPR046338">
    <property type="entry name" value="GAIN_dom_sf"/>
</dbReference>
<dbReference type="InterPro" id="IPR017981">
    <property type="entry name" value="GPCR_2-like_7TM"/>
</dbReference>
<dbReference type="InterPro" id="IPR008078">
    <property type="entry name" value="GPCR_2_Ig-hepta-like_rcpt"/>
</dbReference>
<dbReference type="InterPro" id="IPR000832">
    <property type="entry name" value="GPCR_2_secretin-like"/>
</dbReference>
<dbReference type="InterPro" id="IPR000203">
    <property type="entry name" value="GPS"/>
</dbReference>
<dbReference type="InterPro" id="IPR000082">
    <property type="entry name" value="SEA_dom"/>
</dbReference>
<dbReference type="PANTHER" id="PTHR45813:SF3">
    <property type="entry name" value="ADHESION G-PROTEIN COUPLED RECEPTOR F1"/>
    <property type="match status" value="1"/>
</dbReference>
<dbReference type="PANTHER" id="PTHR45813">
    <property type="entry name" value="IG-LIKE DOMAIN-CONTAINING PROTEIN"/>
    <property type="match status" value="1"/>
</dbReference>
<dbReference type="Pfam" id="PF00002">
    <property type="entry name" value="7tm_2"/>
    <property type="match status" value="1"/>
</dbReference>
<dbReference type="Pfam" id="PF01825">
    <property type="entry name" value="GPS"/>
    <property type="match status" value="1"/>
</dbReference>
<dbReference type="Pfam" id="PF01390">
    <property type="entry name" value="SEA"/>
    <property type="match status" value="1"/>
</dbReference>
<dbReference type="PRINTS" id="PR00249">
    <property type="entry name" value="GPCRSECRETIN"/>
</dbReference>
<dbReference type="PRINTS" id="PR01695">
    <property type="entry name" value="IGHEPTARCPTR"/>
</dbReference>
<dbReference type="SMART" id="SM00303">
    <property type="entry name" value="GPS"/>
    <property type="match status" value="1"/>
</dbReference>
<dbReference type="PROSITE" id="PS50261">
    <property type="entry name" value="G_PROTEIN_RECEP_F2_4"/>
    <property type="match status" value="1"/>
</dbReference>
<dbReference type="PROSITE" id="PS50221">
    <property type="entry name" value="GAIN_B"/>
    <property type="match status" value="1"/>
</dbReference>
<dbReference type="PROSITE" id="PS50024">
    <property type="entry name" value="SEA"/>
    <property type="match status" value="1"/>
</dbReference>
<organism>
    <name type="scientific">Mus musculus</name>
    <name type="common">Mouse</name>
    <dbReference type="NCBI Taxonomy" id="10090"/>
    <lineage>
        <taxon>Eukaryota</taxon>
        <taxon>Metazoa</taxon>
        <taxon>Chordata</taxon>
        <taxon>Craniata</taxon>
        <taxon>Vertebrata</taxon>
        <taxon>Euteleostomi</taxon>
        <taxon>Mammalia</taxon>
        <taxon>Eutheria</taxon>
        <taxon>Euarchontoglires</taxon>
        <taxon>Glires</taxon>
        <taxon>Rodentia</taxon>
        <taxon>Myomorpha</taxon>
        <taxon>Muroidea</taxon>
        <taxon>Muridae</taxon>
        <taxon>Murinae</taxon>
        <taxon>Mus</taxon>
        <taxon>Mus</taxon>
    </lineage>
</organism>
<comment type="function">
    <text evidence="1 6 7">Adhesion G-protein coupled receptor (aGPCR) for N-docosahexaenoylethanolamine (synaptamide), an omega-3 fatty acid lipid highly enriched in the brain (PubMed:27759003). Ligand binding causes a conformation change that triggers signaling via guanine nucleotide-binding proteins (G proteins) and modulates the activity of downstream effectors, such as adenylate cyclase (PubMed:27759003). ADGRF1 is coupled to G(s) G proteins and mediates activation of adenylate cyclase activity (PubMed:27759003). Also able to couple to G(q), G(i) and G(12)/G(13) G proteins; additional evidence is however required to confirm this result in vivo (By similarity). Involved in the development of neurons and cognitive function (PubMed:27759003). In liver, involved in fat accumulation (PubMed:37580962).</text>
</comment>
<comment type="activity regulation">
    <text evidence="1 3">Forms a heterodimer of 2 chains generated by proteolytic processing that remain associated through non-covalent interactions mediated by the GAIN-B domain (By similarity). In the inactivated receptor, the Stachel sequence (also named stalk) is embedded in the GAIN-B domain, where it adopts a beta-strand conformation. On activation, the Stachel moves into the 7 transmembrane region and adopts a twisted hook-shaped configuration that forms contacts within the receptor, leading to coupling of a G-alpha protein, which activates signaling. The cleaved GAIN-B and N-terminal domains can then dissociate from the rest of the receptor (By similarity).</text>
</comment>
<comment type="subunit">
    <text evidence="1">Heterodimer of 2 chains generated by proteolytic processing; the large extracellular N-terminal fragment and the membrane-bound C-terminal fragment predominantly remain associated and non-covalently linked.</text>
</comment>
<comment type="subcellular location">
    <subcellularLocation>
        <location evidence="1">Cell membrane</location>
        <topology evidence="1">Multi-pass membrane protein</topology>
    </subcellularLocation>
</comment>
<comment type="tissue specificity">
    <text evidence="5">Expressed in liver, kidney and adrenal gland. In kidney strong expression in the renal pelvis and the ureter.</text>
</comment>
<comment type="developmental stage">
    <text evidence="6">Highly expressed in fetal brains but rapidly decreases after birth.</text>
</comment>
<comment type="domain">
    <text evidence="1">The Stachel sequence (also named stalk) in the C-terminal part of the extracellular domain (ECD) functions as a tethered agonist. In the inactivated receptor, the Stachel sequence (also named stalk) is embedded in the GAIN-B domain, where it adopts a beta-strand conformation. On activation, the Stachel moves into the 7 transmembrane region and adopts a twisted hook-shaped configuration that forms contacts within the receptor, leading to coupling of a G-alpha protein, which activates signaling.</text>
</comment>
<comment type="PTM">
    <text evidence="1">Autoproteolytically processed at the GPS region of the GAIN-B domain; this cleavage modulates receptor activity.</text>
</comment>
<comment type="disruption phenotype">
    <text evidence="5 6">No visible phenotype (PubMed:22837050). Mice display significant deficits in object recognition and spatial memory (PubMed:27759003).</text>
</comment>
<comment type="similarity">
    <text evidence="9">Belongs to the G-protein coupled receptor 2 family. Adhesion G-protein coupled receptor (ADGR) subfamily.</text>
</comment>
<comment type="sequence caution" evidence="9">
    <conflict type="frameshift">
        <sequence resource="EMBL-CDS" id="BAC25606"/>
    </conflict>
</comment>
<keyword id="KW-1003">Cell membrane</keyword>
<keyword id="KW-1015">Disulfide bond</keyword>
<keyword id="KW-0297">G-protein coupled receptor</keyword>
<keyword id="KW-0325">Glycoprotein</keyword>
<keyword id="KW-0472">Membrane</keyword>
<keyword id="KW-0675">Receptor</keyword>
<keyword id="KW-1185">Reference proteome</keyword>
<keyword id="KW-0732">Signal</keyword>
<keyword id="KW-0807">Transducer</keyword>
<keyword id="KW-0812">Transmembrane</keyword>
<keyword id="KW-1133">Transmembrane helix</keyword>
<feature type="signal peptide" evidence="2">
    <location>
        <begin position="1"/>
        <end position="20"/>
    </location>
</feature>
<feature type="chain" id="PRO_0000012892" description="Adhesion G-protein coupled receptor F1">
    <location>
        <begin position="21"/>
        <end position="908"/>
    </location>
</feature>
<feature type="chain" id="PRO_0000462385" description="Adhesion G-protein coupled receptor F1, N-terminal fragment" evidence="9">
    <location>
        <begin position="21"/>
        <end position="564"/>
    </location>
</feature>
<feature type="chain" id="PRO_0000462386" description="Adhesion G-protein coupled receptor F1, C-terminal fragment" evidence="9">
    <location>
        <begin position="565"/>
        <end position="908"/>
    </location>
</feature>
<feature type="topological domain" description="Extracellular" evidence="9">
    <location>
        <begin position="21"/>
        <end position="588"/>
    </location>
</feature>
<feature type="transmembrane region" description="Helical; Name=1" evidence="2">
    <location>
        <begin position="589"/>
        <end position="609"/>
    </location>
</feature>
<feature type="topological domain" description="Cytoplasmic" evidence="9">
    <location>
        <begin position="610"/>
        <end position="622"/>
    </location>
</feature>
<feature type="transmembrane region" description="Helical; Name=2" evidence="2">
    <location>
        <begin position="623"/>
        <end position="643"/>
    </location>
</feature>
<feature type="topological domain" description="Extracellular" evidence="9">
    <location>
        <begin position="644"/>
        <end position="658"/>
    </location>
</feature>
<feature type="transmembrane region" description="Helical; Name=3" evidence="2">
    <location>
        <begin position="659"/>
        <end position="679"/>
    </location>
</feature>
<feature type="topological domain" description="Cytoplasmic" evidence="9">
    <location>
        <begin position="680"/>
        <end position="697"/>
    </location>
</feature>
<feature type="transmembrane region" description="Helical; Name=4" evidence="2">
    <location>
        <begin position="698"/>
        <end position="718"/>
    </location>
</feature>
<feature type="topological domain" description="Extracellular" evidence="9">
    <location>
        <begin position="719"/>
        <end position="742"/>
    </location>
</feature>
<feature type="transmembrane region" description="Helical; Name=5" evidence="2">
    <location>
        <begin position="743"/>
        <end position="763"/>
    </location>
</feature>
<feature type="topological domain" description="Cytoplasmic" evidence="9">
    <location>
        <begin position="764"/>
        <end position="789"/>
    </location>
</feature>
<feature type="transmembrane region" description="Helical; Name=6" evidence="2">
    <location>
        <begin position="790"/>
        <end position="810"/>
    </location>
</feature>
<feature type="topological domain" description="Extracellular" evidence="9">
    <location>
        <begin position="811"/>
        <end position="818"/>
    </location>
</feature>
<feature type="transmembrane region" description="Helical; Name=7" evidence="2">
    <location>
        <begin position="819"/>
        <end position="839"/>
    </location>
</feature>
<feature type="topological domain" description="Cytoplasmic" evidence="9">
    <location>
        <begin position="840"/>
        <end position="908"/>
    </location>
</feature>
<feature type="domain" description="SEA" evidence="4">
    <location>
        <begin position="147"/>
        <end position="255"/>
    </location>
</feature>
<feature type="domain" description="GAIN-B" evidence="3">
    <location>
        <begin position="434"/>
        <end position="577"/>
    </location>
</feature>
<feature type="region of interest" description="GPS" evidence="3">
    <location>
        <begin position="532"/>
        <end position="577"/>
    </location>
</feature>
<feature type="region of interest" description="Stachel" evidence="1">
    <location>
        <begin position="566"/>
        <end position="574"/>
    </location>
</feature>
<feature type="site" description="Cleavage; by autolysis" evidence="3">
    <location>
        <begin position="564"/>
        <end position="565"/>
    </location>
</feature>
<feature type="glycosylation site" description="N-linked (GlcNAc...) asparagine" evidence="2">
    <location>
        <position position="133"/>
    </location>
</feature>
<feature type="glycosylation site" description="N-linked (GlcNAc...) asparagine" evidence="2">
    <location>
        <position position="167"/>
    </location>
</feature>
<feature type="glycosylation site" description="N-linked (GlcNAc...) asparagine" evidence="2">
    <location>
        <position position="328"/>
    </location>
</feature>
<feature type="glycosylation site" description="N-linked (GlcNAc...) asparagine" evidence="2">
    <location>
        <position position="353"/>
    </location>
</feature>
<feature type="glycosylation site" description="N-linked (GlcNAc...) asparagine" evidence="2">
    <location>
        <position position="367"/>
    </location>
</feature>
<feature type="glycosylation site" description="N-linked (GlcNAc...) asparagine" evidence="2">
    <location>
        <position position="388"/>
    </location>
</feature>
<feature type="glycosylation site" description="N-linked (GlcNAc...) asparagine" evidence="2">
    <location>
        <position position="422"/>
    </location>
</feature>
<feature type="glycosylation site" description="N-linked (GlcNAc...) asparagine" evidence="2">
    <location>
        <position position="453"/>
    </location>
</feature>
<feature type="glycosylation site" description="N-linked (GlcNAc...) asparagine" evidence="2">
    <location>
        <position position="510"/>
    </location>
</feature>
<feature type="glycosylation site" description="N-linked (GlcNAc...) asparagine" evidence="2">
    <location>
        <position position="519"/>
    </location>
</feature>
<feature type="glycosylation site" description="N-linked (GlcNAc...) asparagine" evidence="2">
    <location>
        <position position="526"/>
    </location>
</feature>
<feature type="glycosylation site" description="N-linked (GlcNAc...) asparagine" evidence="2">
    <location>
        <position position="551"/>
    </location>
</feature>
<feature type="glycosylation site" description="N-linked (GlcNAc...) asparagine" evidence="2">
    <location>
        <position position="734"/>
    </location>
</feature>
<feature type="disulfide bond" evidence="3">
    <location>
        <begin position="532"/>
        <end position="559"/>
    </location>
</feature>
<feature type="disulfide bond" evidence="3">
    <location>
        <begin position="547"/>
        <end position="561"/>
    </location>
</feature>
<feature type="disulfide bond" evidence="1">
    <location>
        <begin position="655"/>
        <end position="731"/>
    </location>
</feature>
<feature type="sequence conflict" description="In Ref. 2; AAH19217." evidence="9" ref="2">
    <original>K</original>
    <variation>R</variation>
    <location>
        <position position="72"/>
    </location>
</feature>
<feature type="sequence conflict" description="In Ref. 2; AAH19217." evidence="9" ref="2">
    <original>I</original>
    <variation>V</variation>
    <location>
        <position position="143"/>
    </location>
</feature>
<feature type="sequence conflict" description="In Ref. 2; AAH19217." evidence="9" ref="2">
    <original>K</original>
    <variation>N</variation>
    <location>
        <position position="160"/>
    </location>
</feature>
<name>AGRF1_MOUSE</name>
<sequence length="908" mass="101469">MRIGLLWLVPLFTLTEGTDGFLQQKNDGRRTKEIVSMVEERHPVHEYEVLLQVTYRDPEEKRELKRFLKLLKSPSPSLRGPSKIIRVKATTYCRSRKGFLECACEDSYTWFPPSCLDPQNCCLHTTGPVPSCNCSLRGLRQSINFCERAKVWGTFEIDEKFPEDLWNSSSDVYAHYTVGIENQLKEAYRRVHGFESVRVTQFRKGSIVVGYEVTGSTSPPELLFAIEQEAEKAQEALRRQFPVKYGSFRVFGKAPCNSISFGFGSENDEYTVPCSSGFTGSMTVRCQSSGWQITRESCVLSQLEELKKELRMIAGKITEAGVASLVQNLSTILLQSPSTTVGNLGSVVSLLSNISSLSLANSLTVSNLTLMNVINIADHILDSASITNWTILLQDAKDASSQLLKTLESISSLIPSMALPLNFSGKFIDWKGTPVTQIQSTRGYNYQMEMRQNASLPIRGHVFIEPDQFQKSHPKTIISMASLTFGDILPITQRGNAWVNGPVISTLIQNYSISEIFLNFSKIKGNLTQPRCVFWDFSQLQWSNAGCQLVNETLDTVLCRCSHLTSFSMLMSPFVPSSVVPVVKWITYIGLSISIASLILCLIIESLFWKQTKRSQTSYTRNICLVNIAVSLLIADVWFIIAATVDPSVSPSGVCVAAVFFTHFFYLAVFFWMLVLGILLAYRIILVFHHMALTTMMAIGFCLGYGCPLLISIITLAVTQPSNSYKRNDVCWLNWSDKSKPLLAFVVPALTIVAVNLVVVLLVLRKLWRPAVGERLNQDDKATAIRMGKSLLVLTPLLGLTWGFGIGTMANSHNLAWHVLFALLNAFQGFFIFCFGILLDTKLRQLLSNKLTTLSSWKQTSKRNASDTVTQPKCLRTFNILQHRGMYALSHTGDSSSDITLTQFLSTE</sequence>